<evidence type="ECO:0000255" key="1">
    <source>
        <dbReference type="HAMAP-Rule" id="MF_01008"/>
    </source>
</evidence>
<evidence type="ECO:0000255" key="2">
    <source>
        <dbReference type="PROSITE-ProRule" id="PRU01076"/>
    </source>
</evidence>
<feature type="chain" id="PRO_1000213176" description="Transcriptional regulator MraZ">
    <location>
        <begin position="1"/>
        <end position="160"/>
    </location>
</feature>
<feature type="domain" description="SpoVT-AbrB 1" evidence="2">
    <location>
        <begin position="5"/>
        <end position="50"/>
    </location>
</feature>
<feature type="domain" description="SpoVT-AbrB 2" evidence="2">
    <location>
        <begin position="93"/>
        <end position="136"/>
    </location>
</feature>
<name>MRAZ_GEOSM</name>
<keyword id="KW-0963">Cytoplasm</keyword>
<keyword id="KW-0238">DNA-binding</keyword>
<keyword id="KW-0677">Repeat</keyword>
<keyword id="KW-0804">Transcription</keyword>
<keyword id="KW-0805">Transcription regulation</keyword>
<protein>
    <recommendedName>
        <fullName>Transcriptional regulator MraZ</fullName>
    </recommendedName>
</protein>
<comment type="subunit">
    <text evidence="1">Forms oligomers.</text>
</comment>
<comment type="subcellular location">
    <subcellularLocation>
        <location evidence="1">Cytoplasm</location>
        <location evidence="1">Nucleoid</location>
    </subcellularLocation>
</comment>
<comment type="similarity">
    <text evidence="1">Belongs to the MraZ family.</text>
</comment>
<gene>
    <name evidence="1" type="primary">mraZ</name>
    <name type="ordered locus">GM21_0499</name>
</gene>
<sequence>MFRGKFDTTIDAKGRTSIPAKFREILLDTFGDERFFLTKSSPVRLDGDQVCYGLVIYPYHEFLALEEKLKDGTALGLTVNQLASVRRTILVPAVECVADKLGRVLVPNDLRKTAQLEREIHFVGMQNKVDIYSQAVWARVCEQDEQNFPVDSAALAGLGL</sequence>
<organism>
    <name type="scientific">Geobacter sp. (strain M21)</name>
    <dbReference type="NCBI Taxonomy" id="443144"/>
    <lineage>
        <taxon>Bacteria</taxon>
        <taxon>Pseudomonadati</taxon>
        <taxon>Thermodesulfobacteriota</taxon>
        <taxon>Desulfuromonadia</taxon>
        <taxon>Geobacterales</taxon>
        <taxon>Geobacteraceae</taxon>
        <taxon>Geobacter</taxon>
    </lineage>
</organism>
<reference key="1">
    <citation type="submission" date="2009-07" db="EMBL/GenBank/DDBJ databases">
        <title>Complete sequence of Geobacter sp. M21.</title>
        <authorList>
            <consortium name="US DOE Joint Genome Institute"/>
            <person name="Lucas S."/>
            <person name="Copeland A."/>
            <person name="Lapidus A."/>
            <person name="Glavina del Rio T."/>
            <person name="Dalin E."/>
            <person name="Tice H."/>
            <person name="Bruce D."/>
            <person name="Goodwin L."/>
            <person name="Pitluck S."/>
            <person name="Saunders E."/>
            <person name="Brettin T."/>
            <person name="Detter J.C."/>
            <person name="Han C."/>
            <person name="Larimer F."/>
            <person name="Land M."/>
            <person name="Hauser L."/>
            <person name="Kyrpides N."/>
            <person name="Ovchinnikova G."/>
            <person name="Lovley D."/>
        </authorList>
    </citation>
    <scope>NUCLEOTIDE SEQUENCE [LARGE SCALE GENOMIC DNA]</scope>
    <source>
        <strain>M21</strain>
    </source>
</reference>
<accession>C6DZJ7</accession>
<proteinExistence type="inferred from homology"/>
<dbReference type="EMBL" id="CP001661">
    <property type="protein sequence ID" value="ACT16579.1"/>
    <property type="molecule type" value="Genomic_DNA"/>
</dbReference>
<dbReference type="SMR" id="C6DZJ7"/>
<dbReference type="STRING" id="443144.GM21_0499"/>
<dbReference type="KEGG" id="gem:GM21_0499"/>
<dbReference type="eggNOG" id="COG2001">
    <property type="taxonomic scope" value="Bacteria"/>
</dbReference>
<dbReference type="HOGENOM" id="CLU_107907_0_5_7"/>
<dbReference type="OrthoDB" id="9807753at2"/>
<dbReference type="GO" id="GO:0005737">
    <property type="term" value="C:cytoplasm"/>
    <property type="evidence" value="ECO:0007669"/>
    <property type="project" value="UniProtKB-UniRule"/>
</dbReference>
<dbReference type="GO" id="GO:0009295">
    <property type="term" value="C:nucleoid"/>
    <property type="evidence" value="ECO:0007669"/>
    <property type="project" value="UniProtKB-SubCell"/>
</dbReference>
<dbReference type="GO" id="GO:0003700">
    <property type="term" value="F:DNA-binding transcription factor activity"/>
    <property type="evidence" value="ECO:0007669"/>
    <property type="project" value="UniProtKB-UniRule"/>
</dbReference>
<dbReference type="GO" id="GO:0000976">
    <property type="term" value="F:transcription cis-regulatory region binding"/>
    <property type="evidence" value="ECO:0007669"/>
    <property type="project" value="TreeGrafter"/>
</dbReference>
<dbReference type="GO" id="GO:2000143">
    <property type="term" value="P:negative regulation of DNA-templated transcription initiation"/>
    <property type="evidence" value="ECO:0007669"/>
    <property type="project" value="TreeGrafter"/>
</dbReference>
<dbReference type="CDD" id="cd16321">
    <property type="entry name" value="MraZ_C"/>
    <property type="match status" value="1"/>
</dbReference>
<dbReference type="CDD" id="cd16320">
    <property type="entry name" value="MraZ_N"/>
    <property type="match status" value="1"/>
</dbReference>
<dbReference type="Gene3D" id="3.40.1550.20">
    <property type="entry name" value="Transcriptional regulator MraZ domain"/>
    <property type="match status" value="1"/>
</dbReference>
<dbReference type="HAMAP" id="MF_01008">
    <property type="entry name" value="MraZ"/>
    <property type="match status" value="1"/>
</dbReference>
<dbReference type="InterPro" id="IPR003444">
    <property type="entry name" value="MraZ"/>
</dbReference>
<dbReference type="InterPro" id="IPR035644">
    <property type="entry name" value="MraZ_C"/>
</dbReference>
<dbReference type="InterPro" id="IPR020603">
    <property type="entry name" value="MraZ_dom"/>
</dbReference>
<dbReference type="InterPro" id="IPR035642">
    <property type="entry name" value="MraZ_N"/>
</dbReference>
<dbReference type="InterPro" id="IPR038619">
    <property type="entry name" value="MraZ_sf"/>
</dbReference>
<dbReference type="InterPro" id="IPR007159">
    <property type="entry name" value="SpoVT-AbrB_dom"/>
</dbReference>
<dbReference type="InterPro" id="IPR037914">
    <property type="entry name" value="SpoVT-AbrB_sf"/>
</dbReference>
<dbReference type="NCBIfam" id="NF001482">
    <property type="entry name" value="PRK00326.3-4"/>
    <property type="match status" value="1"/>
</dbReference>
<dbReference type="PANTHER" id="PTHR34701">
    <property type="entry name" value="TRANSCRIPTIONAL REGULATOR MRAZ"/>
    <property type="match status" value="1"/>
</dbReference>
<dbReference type="PANTHER" id="PTHR34701:SF1">
    <property type="entry name" value="TRANSCRIPTIONAL REGULATOR MRAZ"/>
    <property type="match status" value="1"/>
</dbReference>
<dbReference type="Pfam" id="PF02381">
    <property type="entry name" value="MraZ"/>
    <property type="match status" value="2"/>
</dbReference>
<dbReference type="SUPFAM" id="SSF89447">
    <property type="entry name" value="AbrB/MazE/MraZ-like"/>
    <property type="match status" value="1"/>
</dbReference>
<dbReference type="PROSITE" id="PS51740">
    <property type="entry name" value="SPOVT_ABRB"/>
    <property type="match status" value="2"/>
</dbReference>